<gene>
    <name evidence="1" type="primary">norW</name>
    <name evidence="1" type="synonym">flrR</name>
    <name type="ordered locus">EC55989_2973</name>
</gene>
<organism>
    <name type="scientific">Escherichia coli (strain 55989 / EAEC)</name>
    <dbReference type="NCBI Taxonomy" id="585055"/>
    <lineage>
        <taxon>Bacteria</taxon>
        <taxon>Pseudomonadati</taxon>
        <taxon>Pseudomonadota</taxon>
        <taxon>Gammaproteobacteria</taxon>
        <taxon>Enterobacterales</taxon>
        <taxon>Enterobacteriaceae</taxon>
        <taxon>Escherichia</taxon>
    </lineage>
</organism>
<comment type="function">
    <text evidence="1">One of at least two accessory proteins for anaerobic nitric oxide (NO) reductase. Reduces the rubredoxin moiety of NO reductase.</text>
</comment>
<comment type="catalytic activity">
    <reaction evidence="1">
        <text>2 reduced [nitric oxide reductase rubredoxin domain] + NAD(+) + H(+) = 2 oxidized [nitric oxide reductase rubredoxin domain] + NADH</text>
        <dbReference type="Rhea" id="RHEA:42960"/>
        <dbReference type="Rhea" id="RHEA-COMP:10304"/>
        <dbReference type="Rhea" id="RHEA-COMP:10305"/>
        <dbReference type="ChEBI" id="CHEBI:15378"/>
        <dbReference type="ChEBI" id="CHEBI:29033"/>
        <dbReference type="ChEBI" id="CHEBI:29034"/>
        <dbReference type="ChEBI" id="CHEBI:57540"/>
        <dbReference type="ChEBI" id="CHEBI:57945"/>
    </reaction>
</comment>
<comment type="cofactor">
    <cofactor evidence="1">
        <name>FAD</name>
        <dbReference type="ChEBI" id="CHEBI:57692"/>
    </cofactor>
</comment>
<comment type="pathway">
    <text evidence="1">Nitrogen metabolism; nitric oxide reduction.</text>
</comment>
<comment type="subcellular location">
    <subcellularLocation>
        <location evidence="1">Cytoplasm</location>
    </subcellularLocation>
</comment>
<comment type="similarity">
    <text evidence="1">Belongs to the FAD-dependent oxidoreductase family.</text>
</comment>
<proteinExistence type="inferred from homology"/>
<keyword id="KW-0963">Cytoplasm</keyword>
<keyword id="KW-0274">FAD</keyword>
<keyword id="KW-0285">Flavoprotein</keyword>
<keyword id="KW-0520">NAD</keyword>
<keyword id="KW-0560">Oxidoreductase</keyword>
<keyword id="KW-1185">Reference proteome</keyword>
<reference key="1">
    <citation type="journal article" date="2009" name="PLoS Genet.">
        <title>Organised genome dynamics in the Escherichia coli species results in highly diverse adaptive paths.</title>
        <authorList>
            <person name="Touchon M."/>
            <person name="Hoede C."/>
            <person name="Tenaillon O."/>
            <person name="Barbe V."/>
            <person name="Baeriswyl S."/>
            <person name="Bidet P."/>
            <person name="Bingen E."/>
            <person name="Bonacorsi S."/>
            <person name="Bouchier C."/>
            <person name="Bouvet O."/>
            <person name="Calteau A."/>
            <person name="Chiapello H."/>
            <person name="Clermont O."/>
            <person name="Cruveiller S."/>
            <person name="Danchin A."/>
            <person name="Diard M."/>
            <person name="Dossat C."/>
            <person name="Karoui M.E."/>
            <person name="Frapy E."/>
            <person name="Garry L."/>
            <person name="Ghigo J.M."/>
            <person name="Gilles A.M."/>
            <person name="Johnson J."/>
            <person name="Le Bouguenec C."/>
            <person name="Lescat M."/>
            <person name="Mangenot S."/>
            <person name="Martinez-Jehanne V."/>
            <person name="Matic I."/>
            <person name="Nassif X."/>
            <person name="Oztas S."/>
            <person name="Petit M.A."/>
            <person name="Pichon C."/>
            <person name="Rouy Z."/>
            <person name="Ruf C.S."/>
            <person name="Schneider D."/>
            <person name="Tourret J."/>
            <person name="Vacherie B."/>
            <person name="Vallenet D."/>
            <person name="Medigue C."/>
            <person name="Rocha E.P.C."/>
            <person name="Denamur E."/>
        </authorList>
    </citation>
    <scope>NUCLEOTIDE SEQUENCE [LARGE SCALE GENOMIC DNA]</scope>
    <source>
        <strain>55989 / EAEC</strain>
    </source>
</reference>
<accession>B7LEC2</accession>
<name>NORW_ECO55</name>
<evidence type="ECO:0000255" key="1">
    <source>
        <dbReference type="HAMAP-Rule" id="MF_01313"/>
    </source>
</evidence>
<feature type="chain" id="PRO_1000165584" description="Nitric oxide reductase FlRd-NAD(+) reductase">
    <location>
        <begin position="1"/>
        <end position="377"/>
    </location>
</feature>
<dbReference type="EC" id="1.18.1.-" evidence="1"/>
<dbReference type="EMBL" id="CU928145">
    <property type="protein sequence ID" value="CAU98859.1"/>
    <property type="molecule type" value="Genomic_DNA"/>
</dbReference>
<dbReference type="RefSeq" id="WP_000064748.1">
    <property type="nucleotide sequence ID" value="NC_011748.1"/>
</dbReference>
<dbReference type="SMR" id="B7LEC2"/>
<dbReference type="KEGG" id="eck:EC55989_2973"/>
<dbReference type="HOGENOM" id="CLU_003291_4_4_6"/>
<dbReference type="UniPathway" id="UPA00638"/>
<dbReference type="Proteomes" id="UP000000746">
    <property type="component" value="Chromosome"/>
</dbReference>
<dbReference type="GO" id="GO:0005737">
    <property type="term" value="C:cytoplasm"/>
    <property type="evidence" value="ECO:0007669"/>
    <property type="project" value="UniProtKB-SubCell"/>
</dbReference>
<dbReference type="GO" id="GO:0016731">
    <property type="term" value="F:oxidoreductase activity, acting on iron-sulfur proteins as donors, NAD or NADP as acceptor"/>
    <property type="evidence" value="ECO:0007669"/>
    <property type="project" value="UniProtKB-UniRule"/>
</dbReference>
<dbReference type="FunFam" id="3.30.390.120:FF:000001">
    <property type="entry name" value="Nitric oxide reductase FlRd-NAD(+) reductase"/>
    <property type="match status" value="1"/>
</dbReference>
<dbReference type="FunFam" id="3.50.50.60:FF:000075">
    <property type="entry name" value="Nitric oxide reductase FlRd-NAD(+) reductase"/>
    <property type="match status" value="1"/>
</dbReference>
<dbReference type="Gene3D" id="3.30.390.120">
    <property type="match status" value="1"/>
</dbReference>
<dbReference type="Gene3D" id="3.50.50.60">
    <property type="entry name" value="FAD/NAD(P)-binding domain"/>
    <property type="match status" value="2"/>
</dbReference>
<dbReference type="HAMAP" id="MF_01313">
    <property type="entry name" value="NorW"/>
    <property type="match status" value="1"/>
</dbReference>
<dbReference type="InterPro" id="IPR050260">
    <property type="entry name" value="FAD-bd_OxRdtase"/>
</dbReference>
<dbReference type="InterPro" id="IPR036188">
    <property type="entry name" value="FAD/NAD-bd_sf"/>
</dbReference>
<dbReference type="InterPro" id="IPR023753">
    <property type="entry name" value="FAD/NAD-binding_dom"/>
</dbReference>
<dbReference type="InterPro" id="IPR023961">
    <property type="entry name" value="NO_rdtase_NorW"/>
</dbReference>
<dbReference type="InterPro" id="IPR041364">
    <property type="entry name" value="Rbx-bd"/>
</dbReference>
<dbReference type="NCBIfam" id="NF003437">
    <property type="entry name" value="PRK04965.1"/>
    <property type="match status" value="1"/>
</dbReference>
<dbReference type="PANTHER" id="PTHR43429:SF3">
    <property type="entry name" value="NITRITE REDUCTASE [NAD(P)H]"/>
    <property type="match status" value="1"/>
</dbReference>
<dbReference type="PANTHER" id="PTHR43429">
    <property type="entry name" value="PYRIDINE NUCLEOTIDE-DISULFIDE OXIDOREDUCTASE DOMAIN-CONTAINING"/>
    <property type="match status" value="1"/>
</dbReference>
<dbReference type="Pfam" id="PF07992">
    <property type="entry name" value="Pyr_redox_2"/>
    <property type="match status" value="1"/>
</dbReference>
<dbReference type="Pfam" id="PF18113">
    <property type="entry name" value="Rbx_binding"/>
    <property type="match status" value="1"/>
</dbReference>
<dbReference type="PRINTS" id="PR00368">
    <property type="entry name" value="FADPNR"/>
</dbReference>
<dbReference type="PRINTS" id="PR00411">
    <property type="entry name" value="PNDRDTASEI"/>
</dbReference>
<dbReference type="SUPFAM" id="SSF51905">
    <property type="entry name" value="FAD/NAD(P)-binding domain"/>
    <property type="match status" value="1"/>
</dbReference>
<protein>
    <recommendedName>
        <fullName evidence="1">Nitric oxide reductase FlRd-NAD(+) reductase</fullName>
        <ecNumber evidence="1">1.18.1.-</ecNumber>
    </recommendedName>
    <alternativeName>
        <fullName evidence="1">Flavorubredoxin reductase</fullName>
        <shortName evidence="1">FlRd-reductase</shortName>
        <shortName evidence="1">FlavoRb reductase</shortName>
    </alternativeName>
</protein>
<sequence length="377" mass="41332">MSNGIVIIGSGFAARQLVKNIRKQDATIPLTLIAADSMDEYNKPDLSHVISQGQRADDLTRQTAGEFAEQFNLHLFPQTWVTDIDAEARVVKSQNNQWQYDKLVLATGASAFVPPVPGRELMLTLNSQQEYRACETQLRDARRVLIVGGGLIGSELAMDFCRAGKAVTLIDNAASILASLMPPEVSSRLQHRLTEMGVHLLLKSQLQGLEKTDSGILATLDRQRSIEVDAVIAATGLRPETALARRAGLTINRGVCVDSYLQTSNADIYALGDCAEINGQVLPFLQPIQLSAMVLAKNLLGNNTPLKLPAMLVKIKTPELPLHLAGETQRQDLRWQINTERQGMVARGVDDADQLRAFVVSEDRMKEAFGLLKTLPM</sequence>